<feature type="chain" id="PRO_1000145952" description="tRNA N6-adenosine threonylcarbamoyltransferase">
    <location>
        <begin position="1"/>
        <end position="338"/>
    </location>
</feature>
<feature type="binding site" evidence="1">
    <location>
        <position position="110"/>
    </location>
    <ligand>
        <name>Fe cation</name>
        <dbReference type="ChEBI" id="CHEBI:24875"/>
    </ligand>
</feature>
<feature type="binding site" evidence="1">
    <location>
        <position position="114"/>
    </location>
    <ligand>
        <name>Fe cation</name>
        <dbReference type="ChEBI" id="CHEBI:24875"/>
    </ligand>
</feature>
<feature type="binding site" evidence="1">
    <location>
        <begin position="132"/>
        <end position="136"/>
    </location>
    <ligand>
        <name>substrate</name>
    </ligand>
</feature>
<feature type="binding site" evidence="1">
    <location>
        <position position="165"/>
    </location>
    <ligand>
        <name>substrate</name>
    </ligand>
</feature>
<feature type="binding site" evidence="1">
    <location>
        <position position="178"/>
    </location>
    <ligand>
        <name>substrate</name>
    </ligand>
</feature>
<feature type="binding site" evidence="1">
    <location>
        <position position="274"/>
    </location>
    <ligand>
        <name>substrate</name>
    </ligand>
</feature>
<feature type="binding site" evidence="1">
    <location>
        <position position="298"/>
    </location>
    <ligand>
        <name>Fe cation</name>
        <dbReference type="ChEBI" id="CHEBI:24875"/>
    </ligand>
</feature>
<sequence length="338" mass="37496">MKVLGIESSCDDCCAAIVENGNTILSNIKLSQKEHKKYYGIVPEIASRLHTEFIMYVCQQAIISAKINISEIDLIAVTSQPGLIGSLIVGVNFAKGLSIALKKPLICIDHILGHLYAPLLNHTIEYPFLSLVLSGGHTILAKQNNFDDIEILGRTLDDACGEAFDKIAKHYKMGFPGGPNIEKLAIDGNQYAFNFPITIFDKKENRYDFSYSGLKTACIHQLEKFKNNNAQITNNNIAASFQRAAFENLIIPIKRAIKDTNIKKLIISGGVASNLYLREKIKNLEIETYYPPIDLCTDNAAMIAGIGYLMYLKYGASSIETNANSRIENYKYTKGVKL</sequence>
<protein>
    <recommendedName>
        <fullName evidence="1">tRNA N6-adenosine threonylcarbamoyltransferase</fullName>
        <ecNumber evidence="1">2.3.1.234</ecNumber>
    </recommendedName>
    <alternativeName>
        <fullName evidence="1">N6-L-threonylcarbamoyladenine synthase</fullName>
        <shortName evidence="1">t(6)A synthase</shortName>
    </alternativeName>
    <alternativeName>
        <fullName evidence="1">t(6)A37 threonylcarbamoyladenosine biosynthesis protein TsaD</fullName>
    </alternativeName>
    <alternativeName>
        <fullName evidence="1">tRNA threonylcarbamoyladenosine biosynthesis protein TsaD</fullName>
    </alternativeName>
</protein>
<keyword id="KW-0012">Acyltransferase</keyword>
<keyword id="KW-0963">Cytoplasm</keyword>
<keyword id="KW-0408">Iron</keyword>
<keyword id="KW-0479">Metal-binding</keyword>
<keyword id="KW-0808">Transferase</keyword>
<keyword id="KW-0819">tRNA processing</keyword>
<accession>B5RQA5</accession>
<dbReference type="EC" id="2.3.1.234" evidence="1"/>
<dbReference type="EMBL" id="CP000993">
    <property type="protein sequence ID" value="ACH94989.1"/>
    <property type="molecule type" value="Genomic_DNA"/>
</dbReference>
<dbReference type="RefSeq" id="WP_012539150.1">
    <property type="nucleotide sequence ID" value="NC_011244.1"/>
</dbReference>
<dbReference type="SMR" id="B5RQA5"/>
<dbReference type="KEGG" id="bre:BRE_776"/>
<dbReference type="HOGENOM" id="CLU_023208_0_2_12"/>
<dbReference type="Proteomes" id="UP000000612">
    <property type="component" value="Chromosome"/>
</dbReference>
<dbReference type="GO" id="GO:0005737">
    <property type="term" value="C:cytoplasm"/>
    <property type="evidence" value="ECO:0007669"/>
    <property type="project" value="UniProtKB-SubCell"/>
</dbReference>
<dbReference type="GO" id="GO:0005506">
    <property type="term" value="F:iron ion binding"/>
    <property type="evidence" value="ECO:0007669"/>
    <property type="project" value="UniProtKB-UniRule"/>
</dbReference>
<dbReference type="GO" id="GO:0061711">
    <property type="term" value="F:N(6)-L-threonylcarbamoyladenine synthase activity"/>
    <property type="evidence" value="ECO:0007669"/>
    <property type="project" value="UniProtKB-EC"/>
</dbReference>
<dbReference type="GO" id="GO:0002949">
    <property type="term" value="P:tRNA threonylcarbamoyladenosine modification"/>
    <property type="evidence" value="ECO:0007669"/>
    <property type="project" value="UniProtKB-UniRule"/>
</dbReference>
<dbReference type="CDD" id="cd24133">
    <property type="entry name" value="ASKHA_NBD_TsaD_bac"/>
    <property type="match status" value="1"/>
</dbReference>
<dbReference type="FunFam" id="3.30.420.40:FF:000012">
    <property type="entry name" value="tRNA N6-adenosine threonylcarbamoyltransferase"/>
    <property type="match status" value="1"/>
</dbReference>
<dbReference type="Gene3D" id="3.30.420.40">
    <property type="match status" value="2"/>
</dbReference>
<dbReference type="HAMAP" id="MF_01445">
    <property type="entry name" value="TsaD"/>
    <property type="match status" value="1"/>
</dbReference>
<dbReference type="InterPro" id="IPR043129">
    <property type="entry name" value="ATPase_NBD"/>
</dbReference>
<dbReference type="InterPro" id="IPR000905">
    <property type="entry name" value="Gcp-like_dom"/>
</dbReference>
<dbReference type="InterPro" id="IPR017861">
    <property type="entry name" value="KAE1/TsaD"/>
</dbReference>
<dbReference type="InterPro" id="IPR017860">
    <property type="entry name" value="Peptidase_M22_CS"/>
</dbReference>
<dbReference type="InterPro" id="IPR022450">
    <property type="entry name" value="TsaD"/>
</dbReference>
<dbReference type="NCBIfam" id="TIGR00329">
    <property type="entry name" value="gcp_kae1"/>
    <property type="match status" value="1"/>
</dbReference>
<dbReference type="NCBIfam" id="TIGR03723">
    <property type="entry name" value="T6A_TsaD_YgjD"/>
    <property type="match status" value="1"/>
</dbReference>
<dbReference type="PANTHER" id="PTHR11735">
    <property type="entry name" value="TRNA N6-ADENOSINE THREONYLCARBAMOYLTRANSFERASE"/>
    <property type="match status" value="1"/>
</dbReference>
<dbReference type="PANTHER" id="PTHR11735:SF6">
    <property type="entry name" value="TRNA N6-ADENOSINE THREONYLCARBAMOYLTRANSFERASE, MITOCHONDRIAL"/>
    <property type="match status" value="1"/>
</dbReference>
<dbReference type="Pfam" id="PF00814">
    <property type="entry name" value="TsaD"/>
    <property type="match status" value="1"/>
</dbReference>
<dbReference type="PRINTS" id="PR00789">
    <property type="entry name" value="OSIALOPTASE"/>
</dbReference>
<dbReference type="SUPFAM" id="SSF53067">
    <property type="entry name" value="Actin-like ATPase domain"/>
    <property type="match status" value="1"/>
</dbReference>
<dbReference type="PROSITE" id="PS01016">
    <property type="entry name" value="GLYCOPROTEASE"/>
    <property type="match status" value="1"/>
</dbReference>
<gene>
    <name evidence="1" type="primary">tsaD</name>
    <name type="synonym">gcp</name>
    <name type="ordered locus">BRE_776</name>
</gene>
<comment type="function">
    <text evidence="1">Required for the formation of a threonylcarbamoyl group on adenosine at position 37 (t(6)A37) in tRNAs that read codons beginning with adenine. Is involved in the transfer of the threonylcarbamoyl moiety of threonylcarbamoyl-AMP (TC-AMP) to the N6 group of A37, together with TsaE and TsaB. TsaD likely plays a direct catalytic role in this reaction.</text>
</comment>
<comment type="catalytic activity">
    <reaction evidence="1">
        <text>L-threonylcarbamoyladenylate + adenosine(37) in tRNA = N(6)-L-threonylcarbamoyladenosine(37) in tRNA + AMP + H(+)</text>
        <dbReference type="Rhea" id="RHEA:37059"/>
        <dbReference type="Rhea" id="RHEA-COMP:10162"/>
        <dbReference type="Rhea" id="RHEA-COMP:10163"/>
        <dbReference type="ChEBI" id="CHEBI:15378"/>
        <dbReference type="ChEBI" id="CHEBI:73682"/>
        <dbReference type="ChEBI" id="CHEBI:74411"/>
        <dbReference type="ChEBI" id="CHEBI:74418"/>
        <dbReference type="ChEBI" id="CHEBI:456215"/>
        <dbReference type="EC" id="2.3.1.234"/>
    </reaction>
</comment>
<comment type="cofactor">
    <cofactor evidence="1">
        <name>Fe(2+)</name>
        <dbReference type="ChEBI" id="CHEBI:29033"/>
    </cofactor>
    <text evidence="1">Binds 1 Fe(2+) ion per subunit.</text>
</comment>
<comment type="subcellular location">
    <subcellularLocation>
        <location evidence="1">Cytoplasm</location>
    </subcellularLocation>
</comment>
<comment type="similarity">
    <text evidence="1">Belongs to the KAE1 / TsaD family.</text>
</comment>
<evidence type="ECO:0000255" key="1">
    <source>
        <dbReference type="HAMAP-Rule" id="MF_01445"/>
    </source>
</evidence>
<reference key="1">
    <citation type="journal article" date="2008" name="PLoS Genet.">
        <title>The genome of Borrelia recurrentis, the agent of deadly louse-borne relapsing fever, is a degraded subset of tick-borne Borrelia duttonii.</title>
        <authorList>
            <person name="Lescot M."/>
            <person name="Audic S."/>
            <person name="Robert C."/>
            <person name="Nguyen T.T."/>
            <person name="Blanc G."/>
            <person name="Cutler S.J."/>
            <person name="Wincker P."/>
            <person name="Couloux A."/>
            <person name="Claverie J.-M."/>
            <person name="Raoult D."/>
            <person name="Drancourt M."/>
        </authorList>
    </citation>
    <scope>NUCLEOTIDE SEQUENCE [LARGE SCALE GENOMIC DNA]</scope>
    <source>
        <strain>A1</strain>
    </source>
</reference>
<proteinExistence type="inferred from homology"/>
<organism>
    <name type="scientific">Borrelia recurrentis (strain A1)</name>
    <dbReference type="NCBI Taxonomy" id="412418"/>
    <lineage>
        <taxon>Bacteria</taxon>
        <taxon>Pseudomonadati</taxon>
        <taxon>Spirochaetota</taxon>
        <taxon>Spirochaetia</taxon>
        <taxon>Spirochaetales</taxon>
        <taxon>Borreliaceae</taxon>
        <taxon>Borrelia</taxon>
    </lineage>
</organism>
<name>TSAD_BORRA</name>